<keyword id="KW-0027">Amidation</keyword>
<keyword id="KW-0903">Direct protein sequencing</keyword>
<keyword id="KW-0372">Hormone</keyword>
<keyword id="KW-0527">Neuropeptide</keyword>
<keyword id="KW-0873">Pyrrolidone carboxylic acid</keyword>
<keyword id="KW-0964">Secreted</keyword>
<proteinExistence type="evidence at protein level"/>
<protein>
    <recommendedName>
        <fullName evidence="1">Hypertrehalosaemic factor</fullName>
    </recommendedName>
    <alternativeName>
        <fullName evidence="4">Adipokinetic hormone 1</fullName>
        <shortName evidence="4">PriVa-AKH-1</shortName>
    </alternativeName>
    <alternativeName>
        <fullName evidence="1">Hypertrehalosaemic neuropeptide</fullName>
    </alternativeName>
</protein>
<dbReference type="GO" id="GO:0005576">
    <property type="term" value="C:extracellular region"/>
    <property type="evidence" value="ECO:0007669"/>
    <property type="project" value="UniProtKB-SubCell"/>
</dbReference>
<dbReference type="GO" id="GO:0005179">
    <property type="term" value="F:hormone activity"/>
    <property type="evidence" value="ECO:0007669"/>
    <property type="project" value="UniProtKB-KW"/>
</dbReference>
<dbReference type="GO" id="GO:0007218">
    <property type="term" value="P:neuropeptide signaling pathway"/>
    <property type="evidence" value="ECO:0007669"/>
    <property type="project" value="UniProtKB-KW"/>
</dbReference>
<dbReference type="InterPro" id="IPR002047">
    <property type="entry name" value="Adipokinetic_hormone_CS"/>
</dbReference>
<dbReference type="PROSITE" id="PS00256">
    <property type="entry name" value="AKH"/>
    <property type="match status" value="1"/>
</dbReference>
<name>HTF_PRIVA</name>
<accession>P85748</accession>
<feature type="peptide" id="PRO_0000378667" description="Hypertrehalosaemic factor" evidence="3">
    <location>
        <begin position="1"/>
        <end position="10"/>
    </location>
</feature>
<feature type="modified residue" description="Pyrrolidone carboxylic acid" evidence="3">
    <location>
        <position position="1"/>
    </location>
</feature>
<feature type="modified residue" description="Threonine amide" evidence="3">
    <location>
        <position position="10"/>
    </location>
</feature>
<sequence length="10" mass="1092">QVNFSPGWGT</sequence>
<reference evidence="5" key="1">
    <citation type="journal article" date="2009" name="BMC Evol. Biol.">
        <title>A proteomic approach for studying insect phylogeny: CAPA peptides of ancient insect taxa (Dictyoptera, Blattoptera) as a test case.</title>
        <authorList>
            <person name="Roth S."/>
            <person name="Fromm B."/>
            <person name="Gaede G."/>
            <person name="Predel R."/>
        </authorList>
    </citation>
    <scope>PROTEIN SEQUENCE</scope>
    <scope>PYROGLUTAMATE FORMATION AT GLN-1</scope>
    <scope>AMIDATION AT THR-10</scope>
    <source>
        <tissue evidence="3">Corpora cardiaca</tissue>
    </source>
</reference>
<comment type="function">
    <text evidence="5">Hypertrehalosaemic factors are neuropeptides that elevate the level of trehalose in the hemolymph (trehalose is the major carbohydrate in the hemolymph of insects).</text>
</comment>
<comment type="subcellular location">
    <subcellularLocation>
        <location evidence="5">Secreted</location>
    </subcellularLocation>
</comment>
<comment type="similarity">
    <text evidence="2">Belongs to the AKH/HRTH/RPCH family.</text>
</comment>
<organism>
    <name type="scientific">Princisia vanwaerebeki</name>
    <name type="common">Tiger hisser roach</name>
    <dbReference type="NCBI Taxonomy" id="1661849"/>
    <lineage>
        <taxon>Eukaryota</taxon>
        <taxon>Metazoa</taxon>
        <taxon>Ecdysozoa</taxon>
        <taxon>Arthropoda</taxon>
        <taxon>Hexapoda</taxon>
        <taxon>Insecta</taxon>
        <taxon>Pterygota</taxon>
        <taxon>Neoptera</taxon>
        <taxon>Polyneoptera</taxon>
        <taxon>Dictyoptera</taxon>
        <taxon>Blattodea</taxon>
        <taxon>Blaberoidea</taxon>
        <taxon>Blaberidae</taxon>
        <taxon>Oxyhaloinae</taxon>
        <taxon>Princisia</taxon>
    </lineage>
</organism>
<evidence type="ECO:0000250" key="1">
    <source>
        <dbReference type="UniProtKB" id="P67790"/>
    </source>
</evidence>
<evidence type="ECO:0000255" key="2"/>
<evidence type="ECO:0000269" key="3">
    <source>
    </source>
</evidence>
<evidence type="ECO:0000303" key="4">
    <source>
    </source>
</evidence>
<evidence type="ECO:0000305" key="5"/>